<accession>Q0VH33</accession>
<accession>A0JPG7</accession>
<dbReference type="EMBL" id="AY964105">
    <property type="protein sequence ID" value="AAY32592.1"/>
    <property type="molecule type" value="mRNA"/>
</dbReference>
<dbReference type="EMBL" id="BC127416">
    <property type="protein sequence ID" value="AAI27417.1"/>
    <property type="molecule type" value="mRNA"/>
</dbReference>
<dbReference type="RefSeq" id="NP_001090188.1">
    <property type="nucleotide sequence ID" value="NM_001096719.1"/>
</dbReference>
<dbReference type="SMR" id="Q0VH33"/>
<dbReference type="DNASU" id="779069"/>
<dbReference type="GeneID" id="779069"/>
<dbReference type="KEGG" id="xla:779069"/>
<dbReference type="AGR" id="Xenbase:XB-GENE-867580"/>
<dbReference type="CTD" id="779069"/>
<dbReference type="Xenbase" id="XB-GENE-867580">
    <property type="gene designation" value="mxd3.L"/>
</dbReference>
<dbReference type="OMA" id="GQICNIQ"/>
<dbReference type="OrthoDB" id="5920083at2759"/>
<dbReference type="Proteomes" id="UP000186698">
    <property type="component" value="Chromosome 3L"/>
</dbReference>
<dbReference type="Bgee" id="779069">
    <property type="expression patterns" value="Expressed in testis and 19 other cell types or tissues"/>
</dbReference>
<dbReference type="GO" id="GO:0005634">
    <property type="term" value="C:nucleus"/>
    <property type="evidence" value="ECO:0007669"/>
    <property type="project" value="UniProtKB-SubCell"/>
</dbReference>
<dbReference type="GO" id="GO:0000981">
    <property type="term" value="F:DNA-binding transcription factor activity, RNA polymerase II-specific"/>
    <property type="evidence" value="ECO:0000318"/>
    <property type="project" value="GO_Central"/>
</dbReference>
<dbReference type="GO" id="GO:0046983">
    <property type="term" value="F:protein dimerization activity"/>
    <property type="evidence" value="ECO:0007669"/>
    <property type="project" value="InterPro"/>
</dbReference>
<dbReference type="GO" id="GO:0000978">
    <property type="term" value="F:RNA polymerase II cis-regulatory region sequence-specific DNA binding"/>
    <property type="evidence" value="ECO:0000318"/>
    <property type="project" value="GO_Central"/>
</dbReference>
<dbReference type="GO" id="GO:0006357">
    <property type="term" value="P:regulation of transcription by RNA polymerase II"/>
    <property type="evidence" value="ECO:0000318"/>
    <property type="project" value="GO_Central"/>
</dbReference>
<dbReference type="CDD" id="cd18932">
    <property type="entry name" value="bHLHzip_Mad3"/>
    <property type="match status" value="1"/>
</dbReference>
<dbReference type="Gene3D" id="4.10.280.10">
    <property type="entry name" value="Helix-loop-helix DNA-binding domain"/>
    <property type="match status" value="1"/>
</dbReference>
<dbReference type="InterPro" id="IPR011598">
    <property type="entry name" value="bHLH_dom"/>
</dbReference>
<dbReference type="InterPro" id="IPR036638">
    <property type="entry name" value="HLH_DNA-bd_sf"/>
</dbReference>
<dbReference type="PANTHER" id="PTHR11969:SF6">
    <property type="entry name" value="MAX DIMERIZATION PROTEIN 3"/>
    <property type="match status" value="1"/>
</dbReference>
<dbReference type="PANTHER" id="PTHR11969">
    <property type="entry name" value="MAX DIMERIZATION, MAD"/>
    <property type="match status" value="1"/>
</dbReference>
<dbReference type="Pfam" id="PF00010">
    <property type="entry name" value="HLH"/>
    <property type="match status" value="1"/>
</dbReference>
<dbReference type="SMART" id="SM00353">
    <property type="entry name" value="HLH"/>
    <property type="match status" value="1"/>
</dbReference>
<dbReference type="SUPFAM" id="SSF47459">
    <property type="entry name" value="HLH, helix-loop-helix DNA-binding domain"/>
    <property type="match status" value="1"/>
</dbReference>
<dbReference type="PROSITE" id="PS50888">
    <property type="entry name" value="BHLH"/>
    <property type="match status" value="1"/>
</dbReference>
<organism>
    <name type="scientific">Xenopus laevis</name>
    <name type="common">African clawed frog</name>
    <dbReference type="NCBI Taxonomy" id="8355"/>
    <lineage>
        <taxon>Eukaryota</taxon>
        <taxon>Metazoa</taxon>
        <taxon>Chordata</taxon>
        <taxon>Craniata</taxon>
        <taxon>Vertebrata</taxon>
        <taxon>Euteleostomi</taxon>
        <taxon>Amphibia</taxon>
        <taxon>Batrachia</taxon>
        <taxon>Anura</taxon>
        <taxon>Pipoidea</taxon>
        <taxon>Pipidae</taxon>
        <taxon>Xenopodinae</taxon>
        <taxon>Xenopus</taxon>
        <taxon>Xenopus</taxon>
    </lineage>
</organism>
<gene>
    <name type="primary">mxd3</name>
    <name type="synonym">mad3</name>
</gene>
<evidence type="ECO:0000250" key="1"/>
<evidence type="ECO:0000255" key="2">
    <source>
        <dbReference type="PROSITE-ProRule" id="PRU00981"/>
    </source>
</evidence>
<evidence type="ECO:0000256" key="3">
    <source>
        <dbReference type="SAM" id="MobiDB-lite"/>
    </source>
</evidence>
<evidence type="ECO:0000269" key="4">
    <source>
    </source>
</evidence>
<protein>
    <recommendedName>
        <fullName>Max dimerization protein 3</fullName>
        <shortName>Max dimerizer 3</shortName>
    </recommendedName>
    <alternativeName>
        <fullName>Max-associated protein 3</fullName>
    </alternativeName>
    <alternativeName>
        <fullName>Max-interacting transcriptional repressor MAD3</fullName>
    </alternativeName>
</protein>
<proteinExistence type="evidence at transcript level"/>
<feature type="chain" id="PRO_0000253711" description="Max dimerization protein 3">
    <location>
        <begin position="1"/>
        <end position="200"/>
    </location>
</feature>
<feature type="domain" description="bHLH" evidence="2">
    <location>
        <begin position="54"/>
        <end position="106"/>
    </location>
</feature>
<feature type="region of interest" description="Disordered" evidence="3">
    <location>
        <begin position="31"/>
        <end position="56"/>
    </location>
</feature>
<feature type="region of interest" description="Disordered" evidence="3">
    <location>
        <begin position="133"/>
        <end position="164"/>
    </location>
</feature>
<reference key="1">
    <citation type="journal article" date="2005" name="Dev. Dyn.">
        <title>Isolation and comparative expression analysis of the Myc-regulatory proteins Mad1, Mad3, and Mnt during Xenopus development.</title>
        <authorList>
            <person name="Juergens K."/>
            <person name="Rust B."/>
            <person name="Pieler T."/>
            <person name="Henningfeld K.A."/>
        </authorList>
    </citation>
    <scope>NUCLEOTIDE SEQUENCE [MRNA]</scope>
    <scope>TISSUE SPECIFICITY</scope>
    <scope>DEVELOPMENTAL STAGE</scope>
</reference>
<reference key="2">
    <citation type="submission" date="2006-11" db="EMBL/GenBank/DDBJ databases">
        <authorList>
            <consortium name="NIH - Xenopus Gene Collection (XGC) project"/>
        </authorList>
    </citation>
    <scope>NUCLEOTIDE SEQUENCE [LARGE SCALE MRNA]</scope>
    <source>
        <tissue>Spleen</tissue>
    </source>
</reference>
<comment type="function">
    <text evidence="1">Transcriptional repressor. Binds with MAX to form a sequence-specific DNA-binding protein complex which recognizes the core sequence 5'-CAC[GA]TG-3' (By similarity).</text>
</comment>
<comment type="subunit">
    <text evidence="1">Efficient DNA binding requires dimerization with another bHLH protein. Binds DNA as a heterodimer with MAX (By similarity).</text>
</comment>
<comment type="subcellular location">
    <subcellularLocation>
        <location evidence="2">Nucleus</location>
    </subcellularLocation>
</comment>
<comment type="tissue specificity">
    <text evidence="4">Expressed broadly throughout the CNS and the eye, starting at neurula stages.</text>
</comment>
<comment type="developmental stage">
    <text evidence="4">In embryos at stage 20, expressed in the eye vesicle, and later in the neural tube, olfactory placode, midbrain and hindbrain. In addition to expression in the CNS at stage 29, expression is also visible in the pronephros, otic placodes and tailtip. Expression in the eye is localized to the retina. Broadly present throughout the midbrain and hindbrain and expression is not limited to the proliferating cells of the ventricular layer, but detected throughout all layers of the hindbrain.</text>
</comment>
<keyword id="KW-0238">DNA-binding</keyword>
<keyword id="KW-0539">Nucleus</keyword>
<keyword id="KW-1185">Reference proteome</keyword>
<keyword id="KW-0678">Repressor</keyword>
<keyword id="KW-0804">Transcription</keyword>
<keyword id="KW-0805">Transcription regulation</keyword>
<name>MAD3_XENLA</name>
<sequence>MEQLPSNLQVLLQAAEYVERREREAEHGYASILPCDPATPGRRKRQRTNSNPDNVRSVHNELEKHRRAQLRRCLEQLKQQVPLSMENSRHTTLSLLHRAKQHIKKLEDQELRAKSLKEKLRADQQKLRQRLKRLLPPNTERIRTDSLDSSNLSSERSDSDQEDLEVDVEGIILSGNEGELFVSFSAGLEHSYSTPAHAWL</sequence>